<keyword id="KW-0028">Amino-acid biosynthesis</keyword>
<keyword id="KW-0055">Arginine biosynthesis</keyword>
<keyword id="KW-0067">ATP-binding</keyword>
<keyword id="KW-0963">Cytoplasm</keyword>
<keyword id="KW-0418">Kinase</keyword>
<keyword id="KW-0547">Nucleotide-binding</keyword>
<keyword id="KW-1185">Reference proteome</keyword>
<keyword id="KW-0808">Transferase</keyword>
<gene>
    <name evidence="1" type="primary">argB</name>
    <name type="ordered locus">EC55989_4441</name>
</gene>
<accession>B7LA54</accession>
<organism>
    <name type="scientific">Escherichia coli (strain 55989 / EAEC)</name>
    <dbReference type="NCBI Taxonomy" id="585055"/>
    <lineage>
        <taxon>Bacteria</taxon>
        <taxon>Pseudomonadati</taxon>
        <taxon>Pseudomonadota</taxon>
        <taxon>Gammaproteobacteria</taxon>
        <taxon>Enterobacterales</taxon>
        <taxon>Enterobacteriaceae</taxon>
        <taxon>Escherichia</taxon>
    </lineage>
</organism>
<evidence type="ECO:0000255" key="1">
    <source>
        <dbReference type="HAMAP-Rule" id="MF_00082"/>
    </source>
</evidence>
<protein>
    <recommendedName>
        <fullName evidence="1">Acetylglutamate kinase</fullName>
        <ecNumber evidence="1">2.7.2.8</ecNumber>
    </recommendedName>
    <alternativeName>
        <fullName evidence="1">N-acetyl-L-glutamate 5-phosphotransferase</fullName>
    </alternativeName>
    <alternativeName>
        <fullName evidence="1">NAG kinase</fullName>
        <shortName evidence="1">NAGK</shortName>
    </alternativeName>
</protein>
<proteinExistence type="inferred from homology"/>
<dbReference type="EC" id="2.7.2.8" evidence="1"/>
<dbReference type="EMBL" id="CU928145">
    <property type="protein sequence ID" value="CAV01192.1"/>
    <property type="molecule type" value="Genomic_DNA"/>
</dbReference>
<dbReference type="SMR" id="B7LA54"/>
<dbReference type="KEGG" id="eck:EC55989_4441"/>
<dbReference type="HOGENOM" id="CLU_053680_1_1_6"/>
<dbReference type="UniPathway" id="UPA00068">
    <property type="reaction ID" value="UER00107"/>
</dbReference>
<dbReference type="Proteomes" id="UP000000746">
    <property type="component" value="Chromosome"/>
</dbReference>
<dbReference type="GO" id="GO:0005737">
    <property type="term" value="C:cytoplasm"/>
    <property type="evidence" value="ECO:0007669"/>
    <property type="project" value="UniProtKB-SubCell"/>
</dbReference>
<dbReference type="GO" id="GO:0003991">
    <property type="term" value="F:acetylglutamate kinase activity"/>
    <property type="evidence" value="ECO:0007669"/>
    <property type="project" value="UniProtKB-UniRule"/>
</dbReference>
<dbReference type="GO" id="GO:0005524">
    <property type="term" value="F:ATP binding"/>
    <property type="evidence" value="ECO:0007669"/>
    <property type="project" value="UniProtKB-UniRule"/>
</dbReference>
<dbReference type="GO" id="GO:0042450">
    <property type="term" value="P:arginine biosynthetic process via ornithine"/>
    <property type="evidence" value="ECO:0007669"/>
    <property type="project" value="UniProtKB-UniRule"/>
</dbReference>
<dbReference type="GO" id="GO:0006526">
    <property type="term" value="P:L-arginine biosynthetic process"/>
    <property type="evidence" value="ECO:0007669"/>
    <property type="project" value="UniProtKB-UniPathway"/>
</dbReference>
<dbReference type="CDD" id="cd04249">
    <property type="entry name" value="AAK_NAGK-NC"/>
    <property type="match status" value="1"/>
</dbReference>
<dbReference type="FunFam" id="3.40.1160.10:FF:000008">
    <property type="entry name" value="Acetylglutamate kinase"/>
    <property type="match status" value="1"/>
</dbReference>
<dbReference type="Gene3D" id="3.40.1160.10">
    <property type="entry name" value="Acetylglutamate kinase-like"/>
    <property type="match status" value="1"/>
</dbReference>
<dbReference type="HAMAP" id="MF_00082">
    <property type="entry name" value="ArgB"/>
    <property type="match status" value="1"/>
</dbReference>
<dbReference type="InterPro" id="IPR036393">
    <property type="entry name" value="AceGlu_kinase-like_sf"/>
</dbReference>
<dbReference type="InterPro" id="IPR004662">
    <property type="entry name" value="AcgluKinase_fam"/>
</dbReference>
<dbReference type="InterPro" id="IPR037528">
    <property type="entry name" value="ArgB"/>
</dbReference>
<dbReference type="InterPro" id="IPR001048">
    <property type="entry name" value="Asp/Glu/Uridylate_kinase"/>
</dbReference>
<dbReference type="InterPro" id="IPR041731">
    <property type="entry name" value="NAGK-NC"/>
</dbReference>
<dbReference type="NCBIfam" id="TIGR00761">
    <property type="entry name" value="argB"/>
    <property type="match status" value="1"/>
</dbReference>
<dbReference type="PANTHER" id="PTHR23342">
    <property type="entry name" value="N-ACETYLGLUTAMATE SYNTHASE"/>
    <property type="match status" value="1"/>
</dbReference>
<dbReference type="PANTHER" id="PTHR23342:SF0">
    <property type="entry name" value="N-ACETYLGLUTAMATE SYNTHASE, MITOCHONDRIAL"/>
    <property type="match status" value="1"/>
</dbReference>
<dbReference type="Pfam" id="PF00696">
    <property type="entry name" value="AA_kinase"/>
    <property type="match status" value="1"/>
</dbReference>
<dbReference type="PIRSF" id="PIRSF000728">
    <property type="entry name" value="NAGK"/>
    <property type="match status" value="1"/>
</dbReference>
<dbReference type="SUPFAM" id="SSF53633">
    <property type="entry name" value="Carbamate kinase-like"/>
    <property type="match status" value="1"/>
</dbReference>
<feature type="chain" id="PRO_1000118350" description="Acetylglutamate kinase">
    <location>
        <begin position="1"/>
        <end position="257"/>
    </location>
</feature>
<feature type="binding site" evidence="1">
    <location>
        <begin position="43"/>
        <end position="44"/>
    </location>
    <ligand>
        <name>substrate</name>
    </ligand>
</feature>
<feature type="binding site" evidence="1">
    <location>
        <position position="65"/>
    </location>
    <ligand>
        <name>substrate</name>
    </ligand>
</feature>
<feature type="binding site" evidence="1">
    <location>
        <position position="157"/>
    </location>
    <ligand>
        <name>substrate</name>
    </ligand>
</feature>
<feature type="binding site" evidence="1">
    <location>
        <begin position="180"/>
        <end position="185"/>
    </location>
    <ligand>
        <name>ATP</name>
        <dbReference type="ChEBI" id="CHEBI:30616"/>
    </ligand>
</feature>
<feature type="binding site" evidence="1">
    <location>
        <begin position="208"/>
        <end position="210"/>
    </location>
    <ligand>
        <name>ATP</name>
        <dbReference type="ChEBI" id="CHEBI:30616"/>
    </ligand>
</feature>
<feature type="site" description="Transition state stabilizer" evidence="1">
    <location>
        <position position="7"/>
    </location>
</feature>
<feature type="site" description="Transition state stabilizer" evidence="1">
    <location>
        <position position="216"/>
    </location>
</feature>
<reference key="1">
    <citation type="journal article" date="2009" name="PLoS Genet.">
        <title>Organised genome dynamics in the Escherichia coli species results in highly diverse adaptive paths.</title>
        <authorList>
            <person name="Touchon M."/>
            <person name="Hoede C."/>
            <person name="Tenaillon O."/>
            <person name="Barbe V."/>
            <person name="Baeriswyl S."/>
            <person name="Bidet P."/>
            <person name="Bingen E."/>
            <person name="Bonacorsi S."/>
            <person name="Bouchier C."/>
            <person name="Bouvet O."/>
            <person name="Calteau A."/>
            <person name="Chiapello H."/>
            <person name="Clermont O."/>
            <person name="Cruveiller S."/>
            <person name="Danchin A."/>
            <person name="Diard M."/>
            <person name="Dossat C."/>
            <person name="Karoui M.E."/>
            <person name="Frapy E."/>
            <person name="Garry L."/>
            <person name="Ghigo J.M."/>
            <person name="Gilles A.M."/>
            <person name="Johnson J."/>
            <person name="Le Bouguenec C."/>
            <person name="Lescat M."/>
            <person name="Mangenot S."/>
            <person name="Martinez-Jehanne V."/>
            <person name="Matic I."/>
            <person name="Nassif X."/>
            <person name="Oztas S."/>
            <person name="Petit M.A."/>
            <person name="Pichon C."/>
            <person name="Rouy Z."/>
            <person name="Ruf C.S."/>
            <person name="Schneider D."/>
            <person name="Tourret J."/>
            <person name="Vacherie B."/>
            <person name="Vallenet D."/>
            <person name="Medigue C."/>
            <person name="Rocha E.P.C."/>
            <person name="Denamur E."/>
        </authorList>
    </citation>
    <scope>NUCLEOTIDE SEQUENCE [LARGE SCALE GENOMIC DNA]</scope>
    <source>
        <strain>55989 / EAEC</strain>
    </source>
</reference>
<comment type="function">
    <text evidence="1">Catalyzes the ATP-dependent phosphorylation of N-acetyl-L-glutamate.</text>
</comment>
<comment type="catalytic activity">
    <reaction evidence="1">
        <text>N-acetyl-L-glutamate + ATP = N-acetyl-L-glutamyl 5-phosphate + ADP</text>
        <dbReference type="Rhea" id="RHEA:14629"/>
        <dbReference type="ChEBI" id="CHEBI:30616"/>
        <dbReference type="ChEBI" id="CHEBI:44337"/>
        <dbReference type="ChEBI" id="CHEBI:57936"/>
        <dbReference type="ChEBI" id="CHEBI:456216"/>
        <dbReference type="EC" id="2.7.2.8"/>
    </reaction>
</comment>
<comment type="pathway">
    <text evidence="1">Amino-acid biosynthesis; L-arginine biosynthesis; N(2)-acetyl-L-ornithine from L-glutamate: step 2/4.</text>
</comment>
<comment type="subunit">
    <text evidence="1">Homodimer.</text>
</comment>
<comment type="subcellular location">
    <subcellularLocation>
        <location evidence="1">Cytoplasm</location>
    </subcellularLocation>
</comment>
<comment type="similarity">
    <text evidence="1">Belongs to the acetylglutamate kinase family. ArgB subfamily.</text>
</comment>
<sequence>MNPLIIKLGGVLLDSEEALERLFSALVNYRESHQRPLVIVHGGGCVVDELMKGLNLPVKKKNGLRVTPADQIDIITGALAGTANKTLLAWAKKHQIAAVGLFLGDGDSVKVTQLDEELGHVGLAQPGSPKLINSLLENGYLPVVSSIGVTDEGQLMNVNADQAATALAATLGADLILLSDVSGILDGKGQRIAEMTAAKAEQLIEQGIITDGMIVKVNAALDAARTLGRPVDIASWRHAEQLPALFNGMPMGTRILA</sequence>
<name>ARGB_ECO55</name>